<gene>
    <name evidence="1" type="primary">epmA</name>
    <name type="synonym">genX</name>
    <name type="synonym">yjeA</name>
</gene>
<organism>
    <name type="scientific">Avibacterium paragallinarum</name>
    <name type="common">Haemophilus gallinarum</name>
    <dbReference type="NCBI Taxonomy" id="728"/>
    <lineage>
        <taxon>Bacteria</taxon>
        <taxon>Pseudomonadati</taxon>
        <taxon>Pseudomonadota</taxon>
        <taxon>Gammaproteobacteria</taxon>
        <taxon>Pasteurellales</taxon>
        <taxon>Pasteurellaceae</taxon>
        <taxon>Avibacterium</taxon>
    </lineage>
</organism>
<sequence>MSEHQWKPTASIQTLLSRAKIIAEIRQFFSERGLLEVETPILSEFGVTDVHLSTFSTKLISPFQKKEKTLWLSTSPEYPMKRLLSAGSGAIFQLCKVFRNEEAGKKHSPEFTMLEWYRPYFDMYRLINEVDDLLQYILDCEPAESMSYQFAFQEYVGIDPLSASQDKLIEKAKEYCLENAEREDRDTLLQFLFNVAVESQIGKDKPVAIYHFPATQAALAQISSEDHRVAERFEFYYKGLELANGFCELTDANEQRHRFEQDNKQRERLGLPIHQIDERFLAALKAGVPNCSGVALGVDRLIMIALGLENINEVIAFSIENA</sequence>
<evidence type="ECO:0000255" key="1">
    <source>
        <dbReference type="HAMAP-Rule" id="MF_00174"/>
    </source>
</evidence>
<name>EPMA_AVIPA</name>
<dbReference type="EC" id="6.3.2.-" evidence="1"/>
<dbReference type="EMBL" id="AF005272">
    <property type="protein sequence ID" value="AAD01242.1"/>
    <property type="molecule type" value="Genomic_DNA"/>
</dbReference>
<dbReference type="SMR" id="Q9ZIY0"/>
<dbReference type="STRING" id="728.VY92_09800"/>
<dbReference type="eggNOG" id="COG2269">
    <property type="taxonomic scope" value="Bacteria"/>
</dbReference>
<dbReference type="GO" id="GO:0005829">
    <property type="term" value="C:cytosol"/>
    <property type="evidence" value="ECO:0007669"/>
    <property type="project" value="TreeGrafter"/>
</dbReference>
<dbReference type="GO" id="GO:0016880">
    <property type="term" value="F:acid-ammonia (or amide) ligase activity"/>
    <property type="evidence" value="ECO:0007669"/>
    <property type="project" value="UniProtKB-UniRule"/>
</dbReference>
<dbReference type="GO" id="GO:0005524">
    <property type="term" value="F:ATP binding"/>
    <property type="evidence" value="ECO:0007669"/>
    <property type="project" value="UniProtKB-UniRule"/>
</dbReference>
<dbReference type="GO" id="GO:0004824">
    <property type="term" value="F:lysine-tRNA ligase activity"/>
    <property type="evidence" value="ECO:0007669"/>
    <property type="project" value="InterPro"/>
</dbReference>
<dbReference type="GO" id="GO:0000049">
    <property type="term" value="F:tRNA binding"/>
    <property type="evidence" value="ECO:0007669"/>
    <property type="project" value="TreeGrafter"/>
</dbReference>
<dbReference type="GO" id="GO:0006430">
    <property type="term" value="P:lysyl-tRNA aminoacylation"/>
    <property type="evidence" value="ECO:0007669"/>
    <property type="project" value="InterPro"/>
</dbReference>
<dbReference type="FunFam" id="3.30.930.10:FF:000017">
    <property type="entry name" value="Elongation factor P--(R)-beta-lysine ligase"/>
    <property type="match status" value="1"/>
</dbReference>
<dbReference type="Gene3D" id="3.30.930.10">
    <property type="entry name" value="Bira Bifunctional Protein, Domain 2"/>
    <property type="match status" value="1"/>
</dbReference>
<dbReference type="HAMAP" id="MF_00174">
    <property type="entry name" value="EF_P_modif_A"/>
    <property type="match status" value="1"/>
</dbReference>
<dbReference type="InterPro" id="IPR004364">
    <property type="entry name" value="Aa-tRNA-synt_II"/>
</dbReference>
<dbReference type="InterPro" id="IPR006195">
    <property type="entry name" value="aa-tRNA-synth_II"/>
</dbReference>
<dbReference type="InterPro" id="IPR045864">
    <property type="entry name" value="aa-tRNA-synth_II/BPL/LPL"/>
</dbReference>
<dbReference type="InterPro" id="IPR004525">
    <property type="entry name" value="EpmA"/>
</dbReference>
<dbReference type="InterPro" id="IPR018149">
    <property type="entry name" value="Lys-tRNA-synth_II_C"/>
</dbReference>
<dbReference type="NCBIfam" id="TIGR00462">
    <property type="entry name" value="genX"/>
    <property type="match status" value="1"/>
</dbReference>
<dbReference type="NCBIfam" id="NF006828">
    <property type="entry name" value="PRK09350.1"/>
    <property type="match status" value="1"/>
</dbReference>
<dbReference type="PANTHER" id="PTHR42918:SF6">
    <property type="entry name" value="ELONGATION FACTOR P--(R)-BETA-LYSINE LIGASE"/>
    <property type="match status" value="1"/>
</dbReference>
<dbReference type="PANTHER" id="PTHR42918">
    <property type="entry name" value="LYSYL-TRNA SYNTHETASE"/>
    <property type="match status" value="1"/>
</dbReference>
<dbReference type="Pfam" id="PF00152">
    <property type="entry name" value="tRNA-synt_2"/>
    <property type="match status" value="1"/>
</dbReference>
<dbReference type="PRINTS" id="PR00982">
    <property type="entry name" value="TRNASYNTHLYS"/>
</dbReference>
<dbReference type="SUPFAM" id="SSF55681">
    <property type="entry name" value="Class II aaRS and biotin synthetases"/>
    <property type="match status" value="1"/>
</dbReference>
<dbReference type="PROSITE" id="PS50862">
    <property type="entry name" value="AA_TRNA_LIGASE_II"/>
    <property type="match status" value="1"/>
</dbReference>
<protein>
    <recommendedName>
        <fullName evidence="1">Elongation factor P--(R)-beta-lysine ligase</fullName>
        <shortName evidence="1">EF-P--(R)-beta-lysine ligase</shortName>
        <ecNumber evidence="1">6.3.2.-</ecNumber>
    </recommendedName>
    <alternativeName>
        <fullName evidence="1">EF-P post-translational modification enzyme A</fullName>
    </alternativeName>
    <alternativeName>
        <fullName evidence="1">EF-P-lysine lysyltransferase</fullName>
    </alternativeName>
</protein>
<reference key="1">
    <citation type="submission" date="1997-05" db="EMBL/GenBank/DDBJ databases">
        <authorList>
            <person name="Wise A.G."/>
            <person name="Glisson J.R."/>
            <person name="Jackwood M.W."/>
        </authorList>
    </citation>
    <scope>NUCLEOTIDE SEQUENCE [GENOMIC DNA]</scope>
    <source>
        <strain>Tw-1</strain>
    </source>
</reference>
<accession>Q9ZIY0</accession>
<proteinExistence type="inferred from homology"/>
<feature type="chain" id="PRO_0000152723" description="Elongation factor P--(R)-beta-lysine ligase">
    <location>
        <begin position="1"/>
        <end position="322"/>
    </location>
</feature>
<feature type="binding site" evidence="1">
    <location>
        <begin position="75"/>
        <end position="77"/>
    </location>
    <ligand>
        <name>substrate</name>
    </ligand>
</feature>
<feature type="binding site" evidence="1">
    <location>
        <begin position="99"/>
        <end position="101"/>
    </location>
    <ligand>
        <name>ATP</name>
        <dbReference type="ChEBI" id="CHEBI:30616"/>
    </ligand>
</feature>
<feature type="binding site" evidence="1">
    <location>
        <position position="117"/>
    </location>
    <ligand>
        <name>substrate</name>
    </ligand>
</feature>
<feature type="binding site" evidence="1">
    <location>
        <begin position="241"/>
        <end position="242"/>
    </location>
    <ligand>
        <name>ATP</name>
        <dbReference type="ChEBI" id="CHEBI:30616"/>
    </ligand>
</feature>
<feature type="binding site" evidence="1">
    <location>
        <position position="248"/>
    </location>
    <ligand>
        <name>substrate</name>
    </ligand>
</feature>
<feature type="binding site" evidence="1">
    <location>
        <position position="297"/>
    </location>
    <ligand>
        <name>ATP</name>
        <dbReference type="ChEBI" id="CHEBI:30616"/>
    </ligand>
</feature>
<keyword id="KW-0067">ATP-binding</keyword>
<keyword id="KW-0436">Ligase</keyword>
<keyword id="KW-0547">Nucleotide-binding</keyword>
<comment type="function">
    <text evidence="1">With EpmB is involved in the beta-lysylation step of the post-translational modification of translation elongation factor P (EF-P). Catalyzes the ATP-dependent activation of (R)-beta-lysine produced by EpmB, forming a lysyl-adenylate, from which the beta-lysyl moiety is then transferred to the epsilon-amino group of a conserved specific lysine residue in EF-P.</text>
</comment>
<comment type="catalytic activity">
    <reaction evidence="1">
        <text>D-beta-lysine + L-lysyl-[protein] + ATP = N(6)-((3R)-3,6-diaminohexanoyl)-L-lysyl-[protein] + AMP + diphosphate + H(+)</text>
        <dbReference type="Rhea" id="RHEA:83435"/>
        <dbReference type="Rhea" id="RHEA-COMP:9752"/>
        <dbReference type="Rhea" id="RHEA-COMP:20131"/>
        <dbReference type="ChEBI" id="CHEBI:15378"/>
        <dbReference type="ChEBI" id="CHEBI:29969"/>
        <dbReference type="ChEBI" id="CHEBI:30616"/>
        <dbReference type="ChEBI" id="CHEBI:33019"/>
        <dbReference type="ChEBI" id="CHEBI:84138"/>
        <dbReference type="ChEBI" id="CHEBI:156053"/>
        <dbReference type="ChEBI" id="CHEBI:456215"/>
    </reaction>
    <physiologicalReaction direction="left-to-right" evidence="1">
        <dbReference type="Rhea" id="RHEA:83436"/>
    </physiologicalReaction>
</comment>
<comment type="subunit">
    <text evidence="1">Homodimer.</text>
</comment>
<comment type="similarity">
    <text evidence="1">Belongs to the class-II aminoacyl-tRNA synthetase family. EpmA subfamily.</text>
</comment>